<sequence length="325" mass="35095">MAKRIQFAAYGGPEVLEYRDYQPAEPGPREVRVRNRAIGLNFIDTYYRSGLYPAPGLPSGLGSEGAGEVEAVGSEVTRFKVGDRVAYATGPLGAYSELHVLAEEKLVHLPDGIDFEQAAAVMLKGLTTQYLLRQTYELRGGETILFHAAAGGVGLFACQWAKALGVQLIGTVSSPEKARLARQHGAWETIDYSHENVARRVLELTDGKKCPVVYDSVGKDTWETSLDCVAPRGLLVSFGNASGPVTGVNLGILSQKGSLYVTRPTLGSYADTPEKLQAMADELFGLIERGDIRIEINQRFALAEAARAHTELAARRTTGSTVLLP</sequence>
<comment type="catalytic activity">
    <reaction>
        <text>2 a quinone + NADPH + H(+) = 2 a 1,4-benzosemiquinone + NADP(+)</text>
        <dbReference type="Rhea" id="RHEA:14269"/>
        <dbReference type="ChEBI" id="CHEBI:15378"/>
        <dbReference type="ChEBI" id="CHEBI:57783"/>
        <dbReference type="ChEBI" id="CHEBI:58349"/>
        <dbReference type="ChEBI" id="CHEBI:132124"/>
        <dbReference type="ChEBI" id="CHEBI:134225"/>
        <dbReference type="EC" id="1.6.5.5"/>
    </reaction>
</comment>
<comment type="similarity">
    <text evidence="1">Belongs to the zinc-containing alcohol dehydrogenase family. Quinone oxidoreductase subfamily.</text>
</comment>
<dbReference type="EC" id="1.6.5.5"/>
<dbReference type="EMBL" id="X85015">
    <property type="protein sequence ID" value="CAA59375.1"/>
    <property type="molecule type" value="Genomic_DNA"/>
</dbReference>
<dbReference type="EMBL" id="AE004091">
    <property type="protein sequence ID" value="AAG03413.1"/>
    <property type="molecule type" value="Genomic_DNA"/>
</dbReference>
<dbReference type="PIR" id="D83644">
    <property type="entry name" value="D83644"/>
</dbReference>
<dbReference type="PIR" id="S52923">
    <property type="entry name" value="S52923"/>
</dbReference>
<dbReference type="RefSeq" id="NP_248713.1">
    <property type="nucleotide sequence ID" value="NC_002516.2"/>
</dbReference>
<dbReference type="RefSeq" id="WP_003111202.1">
    <property type="nucleotide sequence ID" value="NZ_QZGE01000012.1"/>
</dbReference>
<dbReference type="SMR" id="P43903"/>
<dbReference type="FunCoup" id="P43903">
    <property type="interactions" value="646"/>
</dbReference>
<dbReference type="STRING" id="208964.PA0023"/>
<dbReference type="PaxDb" id="208964-PA0023"/>
<dbReference type="GeneID" id="880685"/>
<dbReference type="KEGG" id="pae:PA0023"/>
<dbReference type="PATRIC" id="fig|208964.12.peg.22"/>
<dbReference type="PseudoCAP" id="PA0023"/>
<dbReference type="HOGENOM" id="CLU_026673_3_1_6"/>
<dbReference type="InParanoid" id="P43903"/>
<dbReference type="OrthoDB" id="9805883at2"/>
<dbReference type="PhylomeDB" id="P43903"/>
<dbReference type="BioCyc" id="PAER208964:G1FZ6-23-MONOMER"/>
<dbReference type="Proteomes" id="UP000002438">
    <property type="component" value="Chromosome"/>
</dbReference>
<dbReference type="GO" id="GO:0005829">
    <property type="term" value="C:cytosol"/>
    <property type="evidence" value="ECO:0000318"/>
    <property type="project" value="GO_Central"/>
</dbReference>
<dbReference type="GO" id="GO:0035925">
    <property type="term" value="F:mRNA 3'-UTR AU-rich region binding"/>
    <property type="evidence" value="ECO:0000318"/>
    <property type="project" value="GO_Central"/>
</dbReference>
<dbReference type="GO" id="GO:0070402">
    <property type="term" value="F:NADPH binding"/>
    <property type="evidence" value="ECO:0000318"/>
    <property type="project" value="GO_Central"/>
</dbReference>
<dbReference type="GO" id="GO:0003960">
    <property type="term" value="F:NADPH:quinone reductase activity"/>
    <property type="evidence" value="ECO:0000318"/>
    <property type="project" value="GO_Central"/>
</dbReference>
<dbReference type="GO" id="GO:0008270">
    <property type="term" value="F:zinc ion binding"/>
    <property type="evidence" value="ECO:0007669"/>
    <property type="project" value="InterPro"/>
</dbReference>
<dbReference type="CDD" id="cd05286">
    <property type="entry name" value="QOR2"/>
    <property type="match status" value="1"/>
</dbReference>
<dbReference type="FunFam" id="3.40.50.720:FF:000053">
    <property type="entry name" value="Quinone oxidoreductase 1"/>
    <property type="match status" value="1"/>
</dbReference>
<dbReference type="Gene3D" id="3.90.180.10">
    <property type="entry name" value="Medium-chain alcohol dehydrogenases, catalytic domain"/>
    <property type="match status" value="1"/>
</dbReference>
<dbReference type="Gene3D" id="3.40.50.720">
    <property type="entry name" value="NAD(P)-binding Rossmann-like Domain"/>
    <property type="match status" value="1"/>
</dbReference>
<dbReference type="InterPro" id="IPR013149">
    <property type="entry name" value="ADH-like_C"/>
</dbReference>
<dbReference type="InterPro" id="IPR013154">
    <property type="entry name" value="ADH-like_N"/>
</dbReference>
<dbReference type="InterPro" id="IPR011032">
    <property type="entry name" value="GroES-like_sf"/>
</dbReference>
<dbReference type="InterPro" id="IPR036291">
    <property type="entry name" value="NAD(P)-bd_dom_sf"/>
</dbReference>
<dbReference type="InterPro" id="IPR020843">
    <property type="entry name" value="PKS_ER"/>
</dbReference>
<dbReference type="InterPro" id="IPR047618">
    <property type="entry name" value="QOR-like"/>
</dbReference>
<dbReference type="InterPro" id="IPR002364">
    <property type="entry name" value="Quin_OxRdtase/zeta-crystal_CS"/>
</dbReference>
<dbReference type="NCBIfam" id="NF008024">
    <property type="entry name" value="PRK10754.1"/>
    <property type="match status" value="1"/>
</dbReference>
<dbReference type="PANTHER" id="PTHR48106">
    <property type="entry name" value="QUINONE OXIDOREDUCTASE PIG3-RELATED"/>
    <property type="match status" value="1"/>
</dbReference>
<dbReference type="PANTHER" id="PTHR48106:SF13">
    <property type="entry name" value="QUINONE OXIDOREDUCTASE-RELATED"/>
    <property type="match status" value="1"/>
</dbReference>
<dbReference type="Pfam" id="PF08240">
    <property type="entry name" value="ADH_N"/>
    <property type="match status" value="1"/>
</dbReference>
<dbReference type="Pfam" id="PF00107">
    <property type="entry name" value="ADH_zinc_N"/>
    <property type="match status" value="1"/>
</dbReference>
<dbReference type="SMART" id="SM00829">
    <property type="entry name" value="PKS_ER"/>
    <property type="match status" value="1"/>
</dbReference>
<dbReference type="SUPFAM" id="SSF50129">
    <property type="entry name" value="GroES-like"/>
    <property type="match status" value="1"/>
</dbReference>
<dbReference type="SUPFAM" id="SSF51735">
    <property type="entry name" value="NAD(P)-binding Rossmann-fold domains"/>
    <property type="match status" value="1"/>
</dbReference>
<dbReference type="PROSITE" id="PS01162">
    <property type="entry name" value="QOR_ZETA_CRYSTAL"/>
    <property type="match status" value="1"/>
</dbReference>
<evidence type="ECO:0000305" key="1"/>
<name>QOR_PSEAE</name>
<accession>P43903</accession>
<keyword id="KW-0521">NADP</keyword>
<keyword id="KW-0560">Oxidoreductase</keyword>
<keyword id="KW-1185">Reference proteome</keyword>
<organism>
    <name type="scientific">Pseudomonas aeruginosa (strain ATCC 15692 / DSM 22644 / CIP 104116 / JCM 14847 / LMG 12228 / 1C / PRS 101 / PAO1)</name>
    <dbReference type="NCBI Taxonomy" id="208964"/>
    <lineage>
        <taxon>Bacteria</taxon>
        <taxon>Pseudomonadati</taxon>
        <taxon>Pseudomonadota</taxon>
        <taxon>Gammaproteobacteria</taxon>
        <taxon>Pseudomonadales</taxon>
        <taxon>Pseudomonadaceae</taxon>
        <taxon>Pseudomonas</taxon>
    </lineage>
</organism>
<gene>
    <name type="primary">qor</name>
    <name type="ordered locus">PA0023</name>
</gene>
<proteinExistence type="inferred from homology"/>
<protein>
    <recommendedName>
        <fullName>Quinone oxidoreductase</fullName>
        <ecNumber>1.6.5.5</ecNumber>
    </recommendedName>
    <alternativeName>
        <fullName>NADPH:quinone reductase</fullName>
    </alternativeName>
</protein>
<feature type="chain" id="PRO_0000160903" description="Quinone oxidoreductase">
    <location>
        <begin position="1"/>
        <end position="325"/>
    </location>
</feature>
<feature type="sequence conflict" description="In Ref. 1; CAA59375." evidence="1" ref="1">
    <original>Y</original>
    <variation>C</variation>
    <location>
        <position position="10"/>
    </location>
</feature>
<reference key="1">
    <citation type="submission" date="1995-02" db="EMBL/GenBank/DDBJ databases">
        <title>Cloning and regulation of the Pseudomonas aeruginosa hemF gene encoding oxygen-dependent coproporphyrinogen III oxidase.</title>
        <authorList>
            <person name="Hungerer C."/>
            <person name="Troup B."/>
            <person name="Jahn D."/>
        </authorList>
    </citation>
    <scope>NUCLEOTIDE SEQUENCE [GENOMIC DNA]</scope>
    <source>
        <strain>ATCC 15692 / DSM 22644 / CIP 104116 / JCM 14847 / LMG 12228 / 1C / PRS 101 / PAO1</strain>
    </source>
</reference>
<reference key="2">
    <citation type="journal article" date="2000" name="Nature">
        <title>Complete genome sequence of Pseudomonas aeruginosa PAO1, an opportunistic pathogen.</title>
        <authorList>
            <person name="Stover C.K."/>
            <person name="Pham X.-Q.T."/>
            <person name="Erwin A.L."/>
            <person name="Mizoguchi S.D."/>
            <person name="Warrener P."/>
            <person name="Hickey M.J."/>
            <person name="Brinkman F.S.L."/>
            <person name="Hufnagle W.O."/>
            <person name="Kowalik D.J."/>
            <person name="Lagrou M."/>
            <person name="Garber R.L."/>
            <person name="Goltry L."/>
            <person name="Tolentino E."/>
            <person name="Westbrock-Wadman S."/>
            <person name="Yuan Y."/>
            <person name="Brody L.L."/>
            <person name="Coulter S.N."/>
            <person name="Folger K.R."/>
            <person name="Kas A."/>
            <person name="Larbig K."/>
            <person name="Lim R.M."/>
            <person name="Smith K.A."/>
            <person name="Spencer D.H."/>
            <person name="Wong G.K.-S."/>
            <person name="Wu Z."/>
            <person name="Paulsen I.T."/>
            <person name="Reizer J."/>
            <person name="Saier M.H. Jr."/>
            <person name="Hancock R.E.W."/>
            <person name="Lory S."/>
            <person name="Olson M.V."/>
        </authorList>
    </citation>
    <scope>NUCLEOTIDE SEQUENCE [LARGE SCALE GENOMIC DNA]</scope>
    <source>
        <strain>ATCC 15692 / DSM 22644 / CIP 104116 / JCM 14847 / LMG 12228 / 1C / PRS 101 / PAO1</strain>
    </source>
</reference>